<name>CLPC_STAAB</name>
<feature type="chain" id="PRO_0000269681" description="ATP-dependent Clp protease ATP-binding subunit ClpC">
    <location>
        <begin position="1"/>
        <end position="818"/>
    </location>
</feature>
<feature type="domain" description="Clp R" evidence="4">
    <location>
        <begin position="3"/>
        <end position="144"/>
    </location>
</feature>
<feature type="domain" description="UVR" evidence="3">
    <location>
        <begin position="417"/>
        <end position="452"/>
    </location>
</feature>
<feature type="region of interest" description="Repeat 1" evidence="4">
    <location>
        <begin position="6"/>
        <end position="71"/>
    </location>
</feature>
<feature type="region of interest" description="Repeat 2" evidence="4">
    <location>
        <begin position="80"/>
        <end position="144"/>
    </location>
</feature>
<feature type="region of interest" description="I">
    <location>
        <begin position="163"/>
        <end position="410"/>
    </location>
</feature>
<feature type="region of interest" description="II">
    <location>
        <begin position="471"/>
        <end position="662"/>
    </location>
</feature>
<feature type="binding site" evidence="2">
    <location>
        <begin position="208"/>
        <end position="215"/>
    </location>
    <ligand>
        <name>ATP</name>
        <dbReference type="ChEBI" id="CHEBI:30616"/>
    </ligand>
</feature>
<feature type="binding site" evidence="2">
    <location>
        <begin position="545"/>
        <end position="552"/>
    </location>
    <ligand>
        <name>ATP</name>
        <dbReference type="ChEBI" id="CHEBI:30616"/>
    </ligand>
</feature>
<comment type="function">
    <text evidence="1">Required for growth at high temperatures, probably by acting as a chaperone during heat shock and targeting heat-denatured proteins for degradation by ClpP.</text>
</comment>
<comment type="similarity">
    <text evidence="5">Belongs to the ClpA/ClpB family. ClpC subfamily.</text>
</comment>
<sequence>MLFGRLTERAQRVLAHAQEEAIRLNHSNIGTEHLLLGLMKEPEGIAAKVLESFNITEDKVIEEVEKLIGHGQDHVGTLHYTPRAKKVIELSMDEARKLHHNFVGTEHILLGLIRENEGVAARVFANLDLNITKARAQVVKALGNPEMSNKNAQASKSNNTPTLDSLARDLTVIAKDGTLDPVIGRDKEITRVIEVLSRRTKNNPVLIGEPGVGKTAIAEGLAQAIVNNEVPETLKDKRVMSLDMGTVVAGTKYRGEFEERLKKVMEEIQQAGNVILFIDELHTLVGAGGAEGAIDASNILKPALARGELQCIGATTLDEYRKNIEKDAALERRFQPVQVDEPSVVDTVAILKGLRDRYEAHHRINISDEAIEAAVKLSNRYVSDRFLPDKAIDLIDEASSKVRLKSHTTPNNLKEIEQEIEKVKNEKDAAVHAQEFENAANLRDKQTKLEKQYEEAKNEWKNTQNGMSTSLSEEDIAEVIAGWTGIPLTKINETESEKLLSLEDTLHERVIGQKDAVNSISKAVRRARAGLKDPKRPIGSFIFLGPTGVGKTELARALAESMFGDDDAMIRVDMSEFMEKHAVSRLVGAPPGYVGHDDGGQLTEKVRRKPYSVILFDEIEKAHPDVFNILLQVLDDGHLTDTKGRTVDFRNTIIIMTSNVGAQELQDQRFAGFGGSSDGQDYETIRKTMLKELKNSFRPEFLNRVDDIIVFHKLTKEELKEIVTMMVNKLTNRLSEQNINIIVTDKAKDKIAEEGYDPEYGARPLIRAIQKTIEDNLSELILDGNQIEGKKVTVDHDGKEFKYDIAEQTSETKTPSQA</sequence>
<proteinExistence type="evidence at protein level"/>
<reference key="1">
    <citation type="journal article" date="2007" name="PLoS ONE">
        <title>Molecular correlates of host specialization in Staphylococcus aureus.</title>
        <authorList>
            <person name="Herron-Olson L."/>
            <person name="Fitzgerald J.R."/>
            <person name="Musser J.M."/>
            <person name="Kapur V."/>
        </authorList>
    </citation>
    <scope>NUCLEOTIDE SEQUENCE [LARGE SCALE GENOMIC DNA]</scope>
    <source>
        <strain>bovine RF122 / ET3-1</strain>
    </source>
</reference>
<protein>
    <recommendedName>
        <fullName>ATP-dependent Clp protease ATP-binding subunit ClpC</fullName>
    </recommendedName>
</protein>
<keyword id="KW-0002">3D-structure</keyword>
<keyword id="KW-0067">ATP-binding</keyword>
<keyword id="KW-0143">Chaperone</keyword>
<keyword id="KW-0547">Nucleotide-binding</keyword>
<keyword id="KW-0677">Repeat</keyword>
<keyword id="KW-0346">Stress response</keyword>
<evidence type="ECO:0000250" key="1"/>
<evidence type="ECO:0000255" key="2"/>
<evidence type="ECO:0000255" key="3">
    <source>
        <dbReference type="PROSITE-ProRule" id="PRU00217"/>
    </source>
</evidence>
<evidence type="ECO:0000255" key="4">
    <source>
        <dbReference type="PROSITE-ProRule" id="PRU01251"/>
    </source>
</evidence>
<evidence type="ECO:0000305" key="5"/>
<gene>
    <name type="primary">clpC</name>
    <name type="ordered locus">SAB0475</name>
</gene>
<dbReference type="EMBL" id="AJ938182">
    <property type="protein sequence ID" value="CAI80163.1"/>
    <property type="molecule type" value="Genomic_DNA"/>
</dbReference>
<dbReference type="RefSeq" id="WP_000897140.1">
    <property type="nucleotide sequence ID" value="NC_007622.1"/>
</dbReference>
<dbReference type="PDB" id="6EM9">
    <property type="method" value="EM"/>
    <property type="resolution" value="8.40 A"/>
    <property type="chains" value="A/B/C/D/E/F/G/H/I/L=1-818"/>
</dbReference>
<dbReference type="PDB" id="6EMW">
    <property type="method" value="EM"/>
    <property type="resolution" value="11.00 A"/>
    <property type="chains" value="E/K/Q/W/c/o=162-342, F/L/R/X/d/p=5-161"/>
</dbReference>
<dbReference type="PDBsum" id="6EM9"/>
<dbReference type="PDBsum" id="6EMW"/>
<dbReference type="EMDB" id="EMD-3895"/>
<dbReference type="EMDB" id="EMD-3897"/>
<dbReference type="SMR" id="Q2YSD6"/>
<dbReference type="KEGG" id="sab:SAB0475"/>
<dbReference type="HOGENOM" id="CLU_005070_4_1_9"/>
<dbReference type="GO" id="GO:0005737">
    <property type="term" value="C:cytoplasm"/>
    <property type="evidence" value="ECO:0007669"/>
    <property type="project" value="TreeGrafter"/>
</dbReference>
<dbReference type="GO" id="GO:0005524">
    <property type="term" value="F:ATP binding"/>
    <property type="evidence" value="ECO:0007669"/>
    <property type="project" value="UniProtKB-KW"/>
</dbReference>
<dbReference type="GO" id="GO:0016887">
    <property type="term" value="F:ATP hydrolysis activity"/>
    <property type="evidence" value="ECO:0007669"/>
    <property type="project" value="InterPro"/>
</dbReference>
<dbReference type="GO" id="GO:0034605">
    <property type="term" value="P:cellular response to heat"/>
    <property type="evidence" value="ECO:0007669"/>
    <property type="project" value="TreeGrafter"/>
</dbReference>
<dbReference type="CDD" id="cd00009">
    <property type="entry name" value="AAA"/>
    <property type="match status" value="1"/>
</dbReference>
<dbReference type="CDD" id="cd19499">
    <property type="entry name" value="RecA-like_ClpB_Hsp104-like"/>
    <property type="match status" value="1"/>
</dbReference>
<dbReference type="FunFam" id="1.10.8.60:FF:000017">
    <property type="entry name" value="ATP-dependent chaperone ClpB"/>
    <property type="match status" value="1"/>
</dbReference>
<dbReference type="FunFam" id="1.10.8.60:FF:000011">
    <property type="entry name" value="ATP-dependent Clp protease ATP-binding subunit"/>
    <property type="match status" value="1"/>
</dbReference>
<dbReference type="FunFam" id="3.40.50.300:FF:000025">
    <property type="entry name" value="ATP-dependent Clp protease subunit"/>
    <property type="match status" value="1"/>
</dbReference>
<dbReference type="FunFam" id="3.40.50.300:FF:000010">
    <property type="entry name" value="Chaperone clpB 1, putative"/>
    <property type="match status" value="1"/>
</dbReference>
<dbReference type="Gene3D" id="1.10.8.60">
    <property type="match status" value="2"/>
</dbReference>
<dbReference type="Gene3D" id="1.10.1780.10">
    <property type="entry name" value="Clp, N-terminal domain"/>
    <property type="match status" value="1"/>
</dbReference>
<dbReference type="Gene3D" id="3.40.50.300">
    <property type="entry name" value="P-loop containing nucleotide triphosphate hydrolases"/>
    <property type="match status" value="2"/>
</dbReference>
<dbReference type="Gene3D" id="4.10.860.10">
    <property type="entry name" value="UVR domain"/>
    <property type="match status" value="1"/>
</dbReference>
<dbReference type="InterPro" id="IPR003593">
    <property type="entry name" value="AAA+_ATPase"/>
</dbReference>
<dbReference type="InterPro" id="IPR003959">
    <property type="entry name" value="ATPase_AAA_core"/>
</dbReference>
<dbReference type="InterPro" id="IPR019489">
    <property type="entry name" value="Clp_ATPase_C"/>
</dbReference>
<dbReference type="InterPro" id="IPR036628">
    <property type="entry name" value="Clp_N_dom_sf"/>
</dbReference>
<dbReference type="InterPro" id="IPR004176">
    <property type="entry name" value="Clp_R_dom"/>
</dbReference>
<dbReference type="InterPro" id="IPR001270">
    <property type="entry name" value="ClpA/B"/>
</dbReference>
<dbReference type="InterPro" id="IPR018368">
    <property type="entry name" value="ClpA/B_CS1"/>
</dbReference>
<dbReference type="InterPro" id="IPR028299">
    <property type="entry name" value="ClpA/B_CS2"/>
</dbReference>
<dbReference type="InterPro" id="IPR041546">
    <property type="entry name" value="ClpA/ClpB_AAA_lid"/>
</dbReference>
<dbReference type="InterPro" id="IPR050130">
    <property type="entry name" value="ClpA_ClpB"/>
</dbReference>
<dbReference type="InterPro" id="IPR027417">
    <property type="entry name" value="P-loop_NTPase"/>
</dbReference>
<dbReference type="InterPro" id="IPR001943">
    <property type="entry name" value="UVR_dom"/>
</dbReference>
<dbReference type="PANTHER" id="PTHR11638">
    <property type="entry name" value="ATP-DEPENDENT CLP PROTEASE"/>
    <property type="match status" value="1"/>
</dbReference>
<dbReference type="PANTHER" id="PTHR11638:SF18">
    <property type="entry name" value="HEAT SHOCK PROTEIN 104"/>
    <property type="match status" value="1"/>
</dbReference>
<dbReference type="Pfam" id="PF00004">
    <property type="entry name" value="AAA"/>
    <property type="match status" value="1"/>
</dbReference>
<dbReference type="Pfam" id="PF07724">
    <property type="entry name" value="AAA_2"/>
    <property type="match status" value="1"/>
</dbReference>
<dbReference type="Pfam" id="PF17871">
    <property type="entry name" value="AAA_lid_9"/>
    <property type="match status" value="1"/>
</dbReference>
<dbReference type="Pfam" id="PF02861">
    <property type="entry name" value="Clp_N"/>
    <property type="match status" value="2"/>
</dbReference>
<dbReference type="Pfam" id="PF10431">
    <property type="entry name" value="ClpB_D2-small"/>
    <property type="match status" value="1"/>
</dbReference>
<dbReference type="PRINTS" id="PR00300">
    <property type="entry name" value="CLPPROTEASEA"/>
</dbReference>
<dbReference type="SMART" id="SM00382">
    <property type="entry name" value="AAA"/>
    <property type="match status" value="2"/>
</dbReference>
<dbReference type="SMART" id="SM01086">
    <property type="entry name" value="ClpB_D2-small"/>
    <property type="match status" value="1"/>
</dbReference>
<dbReference type="SUPFAM" id="SSF81923">
    <property type="entry name" value="Double Clp-N motif"/>
    <property type="match status" value="1"/>
</dbReference>
<dbReference type="SUPFAM" id="SSF52540">
    <property type="entry name" value="P-loop containing nucleoside triphosphate hydrolases"/>
    <property type="match status" value="2"/>
</dbReference>
<dbReference type="PROSITE" id="PS51903">
    <property type="entry name" value="CLP_R"/>
    <property type="match status" value="1"/>
</dbReference>
<dbReference type="PROSITE" id="PS00870">
    <property type="entry name" value="CLPAB_1"/>
    <property type="match status" value="1"/>
</dbReference>
<dbReference type="PROSITE" id="PS00871">
    <property type="entry name" value="CLPAB_2"/>
    <property type="match status" value="1"/>
</dbReference>
<dbReference type="PROSITE" id="PS50151">
    <property type="entry name" value="UVR"/>
    <property type="match status" value="1"/>
</dbReference>
<organism>
    <name type="scientific">Staphylococcus aureus (strain bovine RF122 / ET3-1)</name>
    <dbReference type="NCBI Taxonomy" id="273036"/>
    <lineage>
        <taxon>Bacteria</taxon>
        <taxon>Bacillati</taxon>
        <taxon>Bacillota</taxon>
        <taxon>Bacilli</taxon>
        <taxon>Bacillales</taxon>
        <taxon>Staphylococcaceae</taxon>
        <taxon>Staphylococcus</taxon>
    </lineage>
</organism>
<accession>Q2YSD6</accession>